<name>A1HB1_LOXIN</name>
<dbReference type="EC" id="4.6.1.-" evidence="5"/>
<dbReference type="EMBL" id="AY304471">
    <property type="protein sequence ID" value="AAP97091.2"/>
    <property type="status" value="ALT_INIT"/>
    <property type="molecule type" value="mRNA"/>
</dbReference>
<dbReference type="EMBL" id="AY340702">
    <property type="protein sequence ID" value="AAQ16123.1"/>
    <property type="molecule type" value="mRNA"/>
</dbReference>
<dbReference type="SMR" id="P0CE81"/>
<dbReference type="BRENDA" id="3.1.4.41">
    <property type="organism ID" value="8287"/>
</dbReference>
<dbReference type="GO" id="GO:0005576">
    <property type="term" value="C:extracellular region"/>
    <property type="evidence" value="ECO:0007669"/>
    <property type="project" value="UniProtKB-SubCell"/>
</dbReference>
<dbReference type="GO" id="GO:0016829">
    <property type="term" value="F:lyase activity"/>
    <property type="evidence" value="ECO:0007669"/>
    <property type="project" value="UniProtKB-KW"/>
</dbReference>
<dbReference type="GO" id="GO:0046872">
    <property type="term" value="F:metal ion binding"/>
    <property type="evidence" value="ECO:0007669"/>
    <property type="project" value="UniProtKB-KW"/>
</dbReference>
<dbReference type="GO" id="GO:0008081">
    <property type="term" value="F:phosphoric diester hydrolase activity"/>
    <property type="evidence" value="ECO:0007669"/>
    <property type="project" value="InterPro"/>
</dbReference>
<dbReference type="GO" id="GO:0090729">
    <property type="term" value="F:toxin activity"/>
    <property type="evidence" value="ECO:0007669"/>
    <property type="project" value="UniProtKB-KW"/>
</dbReference>
<dbReference type="GO" id="GO:0031640">
    <property type="term" value="P:killing of cells of another organism"/>
    <property type="evidence" value="ECO:0007669"/>
    <property type="project" value="UniProtKB-KW"/>
</dbReference>
<dbReference type="GO" id="GO:0016042">
    <property type="term" value="P:lipid catabolic process"/>
    <property type="evidence" value="ECO:0007669"/>
    <property type="project" value="UniProtKB-KW"/>
</dbReference>
<dbReference type="CDD" id="cd08576">
    <property type="entry name" value="GDPD_like_SMaseD_PLD"/>
    <property type="match status" value="1"/>
</dbReference>
<dbReference type="Gene3D" id="3.20.20.190">
    <property type="entry name" value="Phosphatidylinositol (PI) phosphodiesterase"/>
    <property type="match status" value="1"/>
</dbReference>
<dbReference type="InterPro" id="IPR017946">
    <property type="entry name" value="PLC-like_Pdiesterase_TIM-brl"/>
</dbReference>
<dbReference type="Pfam" id="PF13653">
    <property type="entry name" value="GDPD_2"/>
    <property type="match status" value="1"/>
</dbReference>
<dbReference type="SUPFAM" id="SSF51695">
    <property type="entry name" value="PLC-like phosphodiesterases"/>
    <property type="match status" value="1"/>
</dbReference>
<keyword id="KW-0204">Cytolysis</keyword>
<keyword id="KW-1061">Dermonecrotic toxin</keyword>
<keyword id="KW-0903">Direct protein sequencing</keyword>
<keyword id="KW-1015">Disulfide bond</keyword>
<keyword id="KW-0354">Hemolysis</keyword>
<keyword id="KW-0442">Lipid degradation</keyword>
<keyword id="KW-0443">Lipid metabolism</keyword>
<keyword id="KW-0456">Lyase</keyword>
<keyword id="KW-0460">Magnesium</keyword>
<keyword id="KW-0479">Metal-binding</keyword>
<keyword id="KW-0964">Secreted</keyword>
<keyword id="KW-0732">Signal</keyword>
<keyword id="KW-0800">Toxin</keyword>
<keyword id="KW-0865">Zymogen</keyword>
<feature type="signal peptide" evidence="7">
    <location>
        <begin position="1"/>
        <end position="18"/>
    </location>
</feature>
<feature type="propeptide" id="PRO_0000392739" evidence="1">
    <location>
        <begin position="19"/>
        <end position="26"/>
    </location>
</feature>
<feature type="chain" id="PRO_0000392740" description="Dermonecrotic toxin LiSicTox-alphaIA1bi">
    <location>
        <begin position="27"/>
        <end position="306"/>
    </location>
</feature>
<feature type="active site" evidence="6">
    <location>
        <position position="38"/>
    </location>
</feature>
<feature type="active site" description="Nucleophile" evidence="6">
    <location>
        <position position="74"/>
    </location>
</feature>
<feature type="binding site" evidence="6">
    <location>
        <position position="58"/>
    </location>
    <ligand>
        <name>Mg(2+)</name>
        <dbReference type="ChEBI" id="CHEBI:18420"/>
    </ligand>
</feature>
<feature type="binding site" evidence="6">
    <location>
        <position position="60"/>
    </location>
    <ligand>
        <name>Mg(2+)</name>
        <dbReference type="ChEBI" id="CHEBI:18420"/>
    </ligand>
</feature>
<feature type="binding site" evidence="6">
    <location>
        <position position="118"/>
    </location>
    <ligand>
        <name>Mg(2+)</name>
        <dbReference type="ChEBI" id="CHEBI:18420"/>
    </ligand>
</feature>
<feature type="disulfide bond" evidence="4">
    <location>
        <begin position="78"/>
        <end position="84"/>
    </location>
</feature>
<feature type="disulfide bond" evidence="4">
    <location>
        <begin position="80"/>
        <end position="223"/>
    </location>
</feature>
<feature type="sequence conflict" description="In Ref. 2; AAQ16123." evidence="14" ref="2">
    <original>IVL</original>
    <variation>ARV</variation>
    <location>
        <begin position="5"/>
        <end position="7"/>
    </location>
</feature>
<feature type="sequence conflict" description="In Ref. 3; AA sequence." evidence="14" ref="3">
    <original>E</original>
    <variation>EI</variation>
    <location>
        <position position="58"/>
    </location>
</feature>
<feature type="sequence conflict" description="In Ref. 3; AA sequence." evidence="14" ref="3">
    <original>S</original>
    <variation>F</variation>
    <location>
        <position position="62"/>
    </location>
</feature>
<feature type="sequence conflict" description="In Ref. 2; AAQ16123." evidence="14" ref="2">
    <original>E</original>
    <variation>D</variation>
    <location>
        <position position="186"/>
    </location>
</feature>
<feature type="sequence conflict" description="In Ref. 2; AAQ16123." evidence="14" ref="2">
    <original>G</original>
    <variation>S</variation>
    <location>
        <position position="199"/>
    </location>
</feature>
<organism>
    <name type="scientific">Loxosceles intermedia</name>
    <name type="common">Brown spider</name>
    <dbReference type="NCBI Taxonomy" id="58218"/>
    <lineage>
        <taxon>Eukaryota</taxon>
        <taxon>Metazoa</taxon>
        <taxon>Ecdysozoa</taxon>
        <taxon>Arthropoda</taxon>
        <taxon>Chelicerata</taxon>
        <taxon>Arachnida</taxon>
        <taxon>Araneae</taxon>
        <taxon>Araneomorphae</taxon>
        <taxon>Haplogynae</taxon>
        <taxon>Scytodoidea</taxon>
        <taxon>Sicariidae</taxon>
        <taxon>Loxosceles</taxon>
    </lineage>
</organism>
<sequence>MLPYIVLVLGCWSVLSQAAQTDDEERAGNRRPIWIMGHMVNAIGQIDEFVNLGANSIETDVSFDDNANPEYTYHGIPCDCGRNCKKYENFNDFLKGLRSATTPGNSKYQEKLVLVVFDLKTGSLYDNQANDAGKKLAKNLLQHYWNNGNNGGRAYIVLSIPDLNHYPLIKGFKDQLTKDGHPELMEKVGHDFSGNDDIGDVGKAYKKAGITGHIWQSDGITNCLPRGLSRVNAAVANRDSANGFINKVYYWTVDKRSTTRDALDAGVDGIMTNYPDVITDVLNEAAYKKKFRVATYDDNPWVTFKK</sequence>
<protein>
    <recommendedName>
        <fullName>Dermonecrotic toxin LiSicTox-alphaIA1bi</fullName>
        <ecNumber evidence="5">4.6.1.-</ecNumber>
    </recommendedName>
    <alternativeName>
        <fullName>LiD1</fullName>
    </alternativeName>
    <alternativeName>
        <fullName>LiP1</fullName>
        <shortName evidence="11 13">P1</shortName>
    </alternativeName>
    <alternativeName>
        <fullName>Phospholipase D</fullName>
        <shortName>PLD</shortName>
    </alternativeName>
    <alternativeName>
        <fullName>Sphingomyelin phosphodiesterase D 1</fullName>
        <shortName>SMD 1</shortName>
        <shortName>SMase D 1</shortName>
        <shortName>Sphingomyelinase D 1</shortName>
    </alternativeName>
    <alternativeName>
        <fullName evidence="12">recLiD1</fullName>
    </alternativeName>
</protein>
<proteinExistence type="evidence at protein level"/>
<comment type="function">
    <text evidence="2 4 8 9 10">Dermonecrotic toxins cleave the phosphodiester linkage between the phosphate and headgroup of certain phospholipids (sphingolipid and lysolipid substrates), forming an alcohol (often choline) and a cyclic phosphate (By similarity). This toxin acts on sphingomyelin (SM) (PubMed:15234562, PubMed:16934304, PubMed:9790962). The level of enzymatic activity is high according to Tambourgi and colleagues or low according to Felicori and colleagues (PubMed:15234562, PubMed:16934304). It may also act on ceramide phosphoethanolamine (CPE), lysophosphatidylcholine (LPC) and lysophosphatidylethanolamine (LPE), but not on lysophosphatidylserine (LPS), and lysophosphatidylglycerol (LPG) (By similarity). It acts by transphosphatidylation, releasing exclusively cyclic phosphate products as second products (By similarity). It induces complement-dependent hemolysis, dermonecrosis, vascular permeability and platelet aggregation (PubMed:15234562, PubMed:16934304, PubMed:9790962). Both C5a and the membrane attack complex may play a role in the induction of dermonecrosis. MMP-9 and MMP-2 produced by skin fibroblasts can also contribute to proteolytic tissue destruction.</text>
</comment>
<comment type="catalytic activity">
    <reaction evidence="15">
        <text>an N-(acyl)-sphingosylphosphocholine = an N-(acyl)-sphingosyl-1,3-cyclic phosphate + choline</text>
        <dbReference type="Rhea" id="RHEA:60652"/>
        <dbReference type="ChEBI" id="CHEBI:15354"/>
        <dbReference type="ChEBI" id="CHEBI:64583"/>
        <dbReference type="ChEBI" id="CHEBI:143892"/>
    </reaction>
</comment>
<comment type="catalytic activity">
    <reaction evidence="2">
        <text>an N-(acyl)-sphingosylphosphoethanolamine = an N-(acyl)-sphingosyl-1,3-cyclic phosphate + ethanolamine</text>
        <dbReference type="Rhea" id="RHEA:60648"/>
        <dbReference type="ChEBI" id="CHEBI:57603"/>
        <dbReference type="ChEBI" id="CHEBI:143891"/>
        <dbReference type="ChEBI" id="CHEBI:143892"/>
    </reaction>
</comment>
<comment type="catalytic activity">
    <reaction evidence="2">
        <text>a 1-acyl-sn-glycero-3-phosphocholine = a 1-acyl-sn-glycero-2,3-cyclic phosphate + choline</text>
        <dbReference type="Rhea" id="RHEA:60700"/>
        <dbReference type="ChEBI" id="CHEBI:15354"/>
        <dbReference type="ChEBI" id="CHEBI:58168"/>
        <dbReference type="ChEBI" id="CHEBI:143947"/>
    </reaction>
</comment>
<comment type="catalytic activity">
    <reaction evidence="2">
        <text>a 1-acyl-sn-glycero-3-phosphoethanolamine = a 1-acyl-sn-glycero-2,3-cyclic phosphate + ethanolamine</text>
        <dbReference type="Rhea" id="RHEA:60704"/>
        <dbReference type="ChEBI" id="CHEBI:57603"/>
        <dbReference type="ChEBI" id="CHEBI:64381"/>
        <dbReference type="ChEBI" id="CHEBI:143947"/>
    </reaction>
</comment>
<comment type="cofactor">
    <cofactor evidence="6">
        <name>Mg(2+)</name>
        <dbReference type="ChEBI" id="CHEBI:18420"/>
    </cofactor>
    <text evidence="6">Binds 1 Mg(2+) ion per subunit.</text>
</comment>
<comment type="subcellular location">
    <subcellularLocation>
        <location evidence="10">Secreted</location>
    </subcellularLocation>
</comment>
<comment type="tissue specificity">
    <text evidence="15">Expressed by the venom gland.</text>
</comment>
<comment type="similarity">
    <text evidence="14">Belongs to the arthropod phospholipase D family. Class II subfamily. Class IIa sub-subfamily.</text>
</comment>
<comment type="caution">
    <text evidence="2 3 5">The most common activity assay for dermonecrotic toxins detects enzymatic activity by monitoring choline release from substrate. Liberation of choline from sphingomyelin (SM) or lysophosphatidylcholine (LPC) is commonly assumed to result from substrate hydrolysis, giving either ceramide-1-phosphate (C1P) or lysophosphatidic acid (LPA), respectively, as a second product. However, two studies from Lajoie and colleagues (2013 and 2015) report the observation of exclusive formation of cyclic phosphate products as second products, resulting from intramolecular transphosphatidylation. Cyclic phosphates have vastly different biological properties from their monoester counterparts, and they may be relevant to the pathology of brown spider envenomation.</text>
</comment>
<comment type="sequence caution" evidence="14">
    <conflict type="erroneous initiation">
        <sequence resource="EMBL-CDS" id="AAP97091"/>
    </conflict>
    <text>Extended N-terminus.</text>
</comment>
<evidence type="ECO:0000250" key="1"/>
<evidence type="ECO:0000250" key="2">
    <source>
        <dbReference type="UniProtKB" id="A0A0D4WTV1"/>
    </source>
</evidence>
<evidence type="ECO:0000250" key="3">
    <source>
        <dbReference type="UniProtKB" id="A0A0D4WV12"/>
    </source>
</evidence>
<evidence type="ECO:0000250" key="4">
    <source>
        <dbReference type="UniProtKB" id="P0CE80"/>
    </source>
</evidence>
<evidence type="ECO:0000250" key="5">
    <source>
        <dbReference type="UniProtKB" id="Q4ZFU2"/>
    </source>
</evidence>
<evidence type="ECO:0000250" key="6">
    <source>
        <dbReference type="UniProtKB" id="Q8I914"/>
    </source>
</evidence>
<evidence type="ECO:0000255" key="7"/>
<evidence type="ECO:0000269" key="8">
    <source>
    </source>
</evidence>
<evidence type="ECO:0000269" key="9">
    <source>
    </source>
</evidence>
<evidence type="ECO:0000269" key="10">
    <source>
    </source>
</evidence>
<evidence type="ECO:0000303" key="11">
    <source>
    </source>
</evidence>
<evidence type="ECO:0000303" key="12">
    <source>
    </source>
</evidence>
<evidence type="ECO:0000303" key="13">
    <source>
    </source>
</evidence>
<evidence type="ECO:0000305" key="14"/>
<evidence type="ECO:0000305" key="15">
    <source>
    </source>
</evidence>
<accession>P0CE81</accession>
<accession>B2KKV9</accession>
<accession>P83045</accession>
<accession>Q3HL91</accession>
<accession>Q6W8Q5</accession>
<accession>Q7YW73</accession>
<reference key="1">
    <citation type="journal article" date="2004" name="Mol. Immunol.">
        <title>Molecular cloning, expression, function and immunoreactivities of members of a gene family of sphingomyelinases from Loxosceles venom glands.</title>
        <authorList>
            <person name="Tambourgi D.V."/>
            <person name="Fernandes-Pedrosa M.F."/>
            <person name="Van Den Berg C.W."/>
            <person name="Goncalves-de-Andrade R.M."/>
            <person name="Ferracini M."/>
            <person name="Paixao-Cavalcante D."/>
            <person name="Morgan B.P."/>
            <person name="Rushmere N.K."/>
        </authorList>
    </citation>
    <scope>NUCLEOTIDE SEQUENCE [MRNA]</scope>
    <scope>FUNCTION</scope>
    <scope>CATALYTIC ACTIVITY</scope>
    <scope>BIOASSAY</scope>
    <source>
        <tissue>Venom gland</tissue>
    </source>
</reference>
<reference key="2">
    <citation type="journal article" date="2002" name="Toxicon">
        <title>Molecular cloning, expression and immunological properties of LiD1, a protein from the dermonecrotic family of Loxosceles intermedia spider venom.</title>
        <authorList>
            <person name="Kalapothakis E."/>
            <person name="Araujo S.C."/>
            <person name="de Castro C.S."/>
            <person name="Mendes T.M."/>
            <person name="Gomez M.V."/>
            <person name="Mangili O.C."/>
            <person name="Gubert I.C."/>
            <person name="Chavez-Olortegui C."/>
        </authorList>
    </citation>
    <scope>NUCLEOTIDE SEQUENCE [MRNA] OF 5-306</scope>
    <source>
        <tissue>Venom gland</tissue>
    </source>
</reference>
<reference key="3">
    <citation type="journal article" date="1998" name="Biochem. Biophys. Res. Commun.">
        <title>Sphingomyelinases in the venom of the spider Loxosceles intermedia are responsible for both dermonecrosis and complement-dependent hemolysis.</title>
        <authorList>
            <person name="Tambourgi D.V."/>
            <person name="Magnoli F.C."/>
            <person name="van den Berg C.W."/>
            <person name="Morgan B.P."/>
            <person name="de Araujo P.S."/>
            <person name="Alves E.W."/>
            <person name="Da Silva W.D."/>
        </authorList>
    </citation>
    <scope>PROTEIN SEQUENCE OF 27-64</scope>
    <scope>FUNCTION</scope>
    <scope>CATALYTIC ACTIVITY</scope>
    <scope>SUBCELLULAR LOCATION</scope>
    <source>
        <tissue>Venom</tissue>
    </source>
</reference>
<reference key="4">
    <citation type="journal article" date="2003" name="Toxicon">
        <title>Protection against dermonecrotic and lethal activities of Loxosceles intermedia spider venom by immunization with a fused recombinant protein.</title>
        <authorList>
            <person name="Araujo S.C."/>
            <person name="Castanheira P."/>
            <person name="Alvarenga L.M."/>
            <person name="Mangili O.C."/>
            <person name="Kalapothakis E."/>
            <person name="Chavez-Olortegui C."/>
        </authorList>
    </citation>
    <scope>IMMUNIZATION WITH RECOMBINANT PROTEIN</scope>
</reference>
<reference key="5">
    <citation type="journal article" date="2005" name="J. Invest. Dermatol.">
        <title>Loxosceles sphingomyelinase induces complement-dependent dermonecrosis, neutrophil infiltration, and endogenous gelatinase expression.</title>
        <authorList>
            <person name="Tambourgi D.V."/>
            <person name="Paixao-Cavalcante D."/>
            <person name="Goncalves-de-Andrade R.M."/>
            <person name="Fernandes-Pedrosa M.F."/>
            <person name="Magnoli F.C."/>
            <person name="Morgan B.P."/>
            <person name="van den Berg C.W."/>
        </authorList>
    </citation>
    <scope>FUNCTION</scope>
</reference>
<reference key="6">
    <citation type="journal article" date="2006" name="Toxicon">
        <title>Functional characterization and epitope analysis of a recombinant dermonecrotic protein from Loxosceles intermedia spider.</title>
        <authorList>
            <person name="Felicori L."/>
            <person name="Araujo S.C."/>
            <person name="de Avila R.A."/>
            <person name="Sanchez E.F."/>
            <person name="Granier C."/>
            <person name="Kalapothakis E."/>
            <person name="Chavez-Olortegui C."/>
        </authorList>
    </citation>
    <scope>FUNCTION</scope>
</reference>